<sequence>MAFLKKSLFLVLFLGLVSLSIGEEEKREEEEKNEEGANQEENAENKEKRFIGTLIPLALGALTKLFKG</sequence>
<dbReference type="EMBL" id="KY748198">
    <property type="protein sequence ID" value="AVG44202.1"/>
    <property type="molecule type" value="mRNA"/>
</dbReference>
<dbReference type="GO" id="GO:0005576">
    <property type="term" value="C:extracellular region"/>
    <property type="evidence" value="ECO:0000314"/>
    <property type="project" value="UniProtKB"/>
</dbReference>
<dbReference type="GO" id="GO:0050829">
    <property type="term" value="P:defense response to Gram-negative bacterium"/>
    <property type="evidence" value="ECO:0000314"/>
    <property type="project" value="UniProtKB"/>
</dbReference>
<dbReference type="GO" id="GO:0050830">
    <property type="term" value="P:defense response to Gram-positive bacterium"/>
    <property type="evidence" value="ECO:0000314"/>
    <property type="project" value="UniProtKB"/>
</dbReference>
<dbReference type="GO" id="GO:0042832">
    <property type="term" value="P:defense response to protozoan"/>
    <property type="evidence" value="ECO:0000314"/>
    <property type="project" value="UniProtKB"/>
</dbReference>
<dbReference type="GO" id="GO:0044179">
    <property type="term" value="P:hemolysis in another organism"/>
    <property type="evidence" value="ECO:0000314"/>
    <property type="project" value="UniProtKB"/>
</dbReference>
<dbReference type="GO" id="GO:0045087">
    <property type="term" value="P:innate immune response"/>
    <property type="evidence" value="ECO:0007669"/>
    <property type="project" value="UniProtKB-KW"/>
</dbReference>
<dbReference type="InterPro" id="IPR004275">
    <property type="entry name" value="Frog_antimicrobial_propeptide"/>
</dbReference>
<dbReference type="Pfam" id="PF03032">
    <property type="entry name" value="FSAP_sig_propep"/>
    <property type="match status" value="1"/>
</dbReference>
<accession>A0A2L2DDE6</accession>
<proteinExistence type="evidence at protein level"/>
<organism evidence="6">
    <name type="scientific">Boana raniceps</name>
    <name type="common">Chaco tree frog</name>
    <name type="synonym">Hyla roeschmanni</name>
    <dbReference type="NCBI Taxonomy" id="192750"/>
    <lineage>
        <taxon>Eukaryota</taxon>
        <taxon>Metazoa</taxon>
        <taxon>Chordata</taxon>
        <taxon>Craniata</taxon>
        <taxon>Vertebrata</taxon>
        <taxon>Euteleostomi</taxon>
        <taxon>Amphibia</taxon>
        <taxon>Batrachia</taxon>
        <taxon>Anura</taxon>
        <taxon>Neobatrachia</taxon>
        <taxon>Hyloidea</taxon>
        <taxon>Hylidae</taxon>
        <taxon>Hylinae</taxon>
        <taxon>Cophomantini</taxon>
        <taxon>Boana</taxon>
    </lineage>
</organism>
<protein>
    <recommendedName>
        <fullName evidence="4">Figainin 1</fullName>
    </recommendedName>
    <alternativeName>
        <fullName evidence="4">Br24</fullName>
    </alternativeName>
</protein>
<reference evidence="6" key="1">
    <citation type="submission" date="2017-03" db="EMBL/GenBank/DDBJ databases">
        <title>Response of Hypsiboas raniceps to abiotic and biotic stresses: gene expression and MALDI-mass spectrometry imaging analysis of skin peptides.</title>
        <authorList>
            <person name="Barbosa E.A."/>
            <person name="Campos P.F."/>
            <person name="Andrade A.C."/>
            <person name="Bloch C."/>
        </authorList>
    </citation>
    <scope>NUCLEOTIDE SEQUENCE [MRNA]</scope>
</reference>
<reference evidence="5" key="2">
    <citation type="journal article" date="2020" name="Antibiotics">
        <title>Figainin 1, a Novel Amphibian Skin Peptide with Antimicrobial and Antiproliferative Properties.</title>
        <authorList>
            <person name="Santana C.J.C."/>
            <person name="Magalhaes A.C.M."/>
            <person name="Dos Santos Junior A.C.M."/>
            <person name="Ricart C.A.O."/>
            <person name="Lima B.D."/>
            <person name="Alvares A.D.C.M."/>
            <person name="Freitas S.M."/>
            <person name="Pires O.R. Jr."/>
            <person name="Fontes W."/>
            <person name="Castro M.S."/>
        </authorList>
    </citation>
    <scope>PROTEIN SEQUENCE OF 50-67</scope>
    <scope>FUNCTION</scope>
    <scope>SUBCELLULAR LOCATION</scope>
    <scope>TISSUE SPECIFICITY</scope>
    <scope>MASS SPECTROMETRY</scope>
    <scope>AMIDATION AT LYS-67</scope>
    <source>
        <tissue evidence="4">Skin secretion</tissue>
    </source>
</reference>
<comment type="function">
    <text evidence="3">Antimicrobial peptide that displays antibacterial and antiprotozoal activity (PubMed:32967114). Exhibits antibacterial activity against the Gram-positive bacteria S.epidermidis ATCC 12228 (MIC=2 uM), E.casseliflavus ATCC 700327 (MIC=16 uM), S.aureus ATCC 25923 (MIC=4 uM) and E.faecalis ATCC 29212 (MIC=8 uM), and the Gram-negative bacteria E.coli ATCC 25922 (MIC=16 uM) and K.pneumoniae ATCC 13883 (MIC=4 uM) (PubMed:32967114). Displays antiprotozoal activity against the epimastigote form of T.cruzi (IC(50)=15.9 uM) (PubMed:32967114). Does not show antimicrobial activity against the Gram-negative bacterium P.aeruginosa ATCC 27853, or the fungi C.albicans ATCC 90028 and C.parapsilosis ATCC 22019 (PubMed:32967114). Shows high cytolytic activity against human erythrocytes (HC(50)=10 uM), and displays anti-proliferative effects against various cancer cell lines including MCF-7 breast cancer cells (IC(50)=13.7 uM), HeLa cervical adenocarcinoma cells (IC(50)=11.1 uM) and B16F10 murine melanoma cells (IC(50)=10.5 uM) (PubMed:32967114).</text>
</comment>
<comment type="subcellular location">
    <subcellularLocation>
        <location evidence="3">Secreted</location>
    </subcellularLocation>
</comment>
<comment type="tissue specificity">
    <text evidence="3">Expressed by the skin glands.</text>
</comment>
<comment type="mass spectrometry"/>
<comment type="similarity">
    <text evidence="5">Belongs to the frog skin active peptide (FSAP) family.</text>
</comment>
<keyword id="KW-0027">Amidation</keyword>
<keyword id="KW-0878">Amphibian defense peptide</keyword>
<keyword id="KW-0044">Antibiotic</keyword>
<keyword id="KW-0929">Antimicrobial</keyword>
<keyword id="KW-0165">Cleavage on pair of basic residues</keyword>
<keyword id="KW-0204">Cytolysis</keyword>
<keyword id="KW-0903">Direct protein sequencing</keyword>
<keyword id="KW-0354">Hemolysis</keyword>
<keyword id="KW-0391">Immunity</keyword>
<keyword id="KW-0399">Innate immunity</keyword>
<keyword id="KW-0964">Secreted</keyword>
<keyword id="KW-0732">Signal</keyword>
<name>FIG01_BOARA</name>
<evidence type="ECO:0000255" key="1"/>
<evidence type="ECO:0000256" key="2">
    <source>
        <dbReference type="SAM" id="MobiDB-lite"/>
    </source>
</evidence>
<evidence type="ECO:0000269" key="3">
    <source>
    </source>
</evidence>
<evidence type="ECO:0000303" key="4">
    <source>
    </source>
</evidence>
<evidence type="ECO:0000305" key="5"/>
<evidence type="ECO:0000312" key="6">
    <source>
        <dbReference type="EMBL" id="AVG44202.1"/>
    </source>
</evidence>
<feature type="signal peptide" evidence="1">
    <location>
        <begin position="1"/>
        <end position="22"/>
    </location>
</feature>
<feature type="propeptide" id="PRO_0000455243" evidence="3">
    <location>
        <begin position="23"/>
        <end position="47"/>
    </location>
</feature>
<feature type="peptide" id="PRO_0000455244" description="Figainin 1" evidence="3">
    <location>
        <begin position="50"/>
        <end position="67"/>
    </location>
</feature>
<feature type="region of interest" description="Disordered" evidence="2">
    <location>
        <begin position="23"/>
        <end position="45"/>
    </location>
</feature>
<feature type="compositionally biased region" description="Acidic residues" evidence="2">
    <location>
        <begin position="26"/>
        <end position="42"/>
    </location>
</feature>
<feature type="modified residue" description="Lysine amide" evidence="3">
    <location>
        <position position="67"/>
    </location>
</feature>